<accession>Q47JB1</accession>
<organism>
    <name type="scientific">Dechloromonas aromatica (strain RCB)</name>
    <dbReference type="NCBI Taxonomy" id="159087"/>
    <lineage>
        <taxon>Bacteria</taxon>
        <taxon>Pseudomonadati</taxon>
        <taxon>Pseudomonadota</taxon>
        <taxon>Betaproteobacteria</taxon>
        <taxon>Rhodocyclales</taxon>
        <taxon>Azonexaceae</taxon>
        <taxon>Dechloromonas</taxon>
    </lineage>
</organism>
<proteinExistence type="inferred from homology"/>
<evidence type="ECO:0000255" key="1">
    <source>
        <dbReference type="HAMAP-Rule" id="MF_00368"/>
    </source>
</evidence>
<evidence type="ECO:0000305" key="2"/>
<feature type="chain" id="PRO_0000243415" description="Large ribosomal subunit protein bL12">
    <location>
        <begin position="1"/>
        <end position="123"/>
    </location>
</feature>
<keyword id="KW-0687">Ribonucleoprotein</keyword>
<keyword id="KW-0689">Ribosomal protein</keyword>
<sequence length="123" mass="12381">MAISKEDILEAVGSLTVMELNDLVKAFEEKFGVSAAAVAVAGPAGAGAAAAEEQTEFTVMLTGAGDKKVEVIKVVRAATGLGLKEAKDLVDGAPKAVKEGVSKADAEALKAQLEAAGAKVEVK</sequence>
<protein>
    <recommendedName>
        <fullName evidence="1">Large ribosomal subunit protein bL12</fullName>
    </recommendedName>
    <alternativeName>
        <fullName evidence="2">50S ribosomal protein L7/L12</fullName>
    </alternativeName>
</protein>
<comment type="function">
    <text evidence="1">Forms part of the ribosomal stalk which helps the ribosome interact with GTP-bound translation factors. Is thus essential for accurate translation.</text>
</comment>
<comment type="subunit">
    <text evidence="1">Homodimer. Part of the ribosomal stalk of the 50S ribosomal subunit. Forms a multimeric L10(L12)X complex, where L10 forms an elongated spine to which 2 to 4 L12 dimers bind in a sequential fashion. Binds GTP-bound translation factors.</text>
</comment>
<comment type="similarity">
    <text evidence="1">Belongs to the bacterial ribosomal protein bL12 family.</text>
</comment>
<reference key="1">
    <citation type="journal article" date="2009" name="BMC Genomics">
        <title>Metabolic analysis of the soil microbe Dechloromonas aromatica str. RCB: indications of a surprisingly complex life-style and cryptic anaerobic pathways for aromatic degradation.</title>
        <authorList>
            <person name="Salinero K.K."/>
            <person name="Keller K."/>
            <person name="Feil W.S."/>
            <person name="Feil H."/>
            <person name="Trong S."/>
            <person name="Di Bartolo G."/>
            <person name="Lapidus A."/>
        </authorList>
    </citation>
    <scope>NUCLEOTIDE SEQUENCE [LARGE SCALE GENOMIC DNA]</scope>
    <source>
        <strain>RCB</strain>
    </source>
</reference>
<gene>
    <name evidence="1" type="primary">rplL</name>
    <name type="ordered locus">Daro_0311</name>
</gene>
<dbReference type="EMBL" id="CP000089">
    <property type="protein sequence ID" value="AAZ45070.1"/>
    <property type="molecule type" value="Genomic_DNA"/>
</dbReference>
<dbReference type="SMR" id="Q47JB1"/>
<dbReference type="STRING" id="159087.Daro_0311"/>
<dbReference type="KEGG" id="dar:Daro_0311"/>
<dbReference type="eggNOG" id="COG0222">
    <property type="taxonomic scope" value="Bacteria"/>
</dbReference>
<dbReference type="HOGENOM" id="CLU_086499_3_0_4"/>
<dbReference type="OrthoDB" id="9811748at2"/>
<dbReference type="GO" id="GO:0022625">
    <property type="term" value="C:cytosolic large ribosomal subunit"/>
    <property type="evidence" value="ECO:0007669"/>
    <property type="project" value="TreeGrafter"/>
</dbReference>
<dbReference type="GO" id="GO:0003729">
    <property type="term" value="F:mRNA binding"/>
    <property type="evidence" value="ECO:0007669"/>
    <property type="project" value="TreeGrafter"/>
</dbReference>
<dbReference type="GO" id="GO:0003735">
    <property type="term" value="F:structural constituent of ribosome"/>
    <property type="evidence" value="ECO:0007669"/>
    <property type="project" value="InterPro"/>
</dbReference>
<dbReference type="GO" id="GO:0006412">
    <property type="term" value="P:translation"/>
    <property type="evidence" value="ECO:0007669"/>
    <property type="project" value="UniProtKB-UniRule"/>
</dbReference>
<dbReference type="CDD" id="cd00387">
    <property type="entry name" value="Ribosomal_L7_L12"/>
    <property type="match status" value="1"/>
</dbReference>
<dbReference type="FunFam" id="1.20.5.710:FF:000003">
    <property type="entry name" value="50S ribosomal protein L7/L12"/>
    <property type="match status" value="1"/>
</dbReference>
<dbReference type="FunFam" id="3.30.1390.10:FF:000001">
    <property type="entry name" value="50S ribosomal protein L7/L12"/>
    <property type="match status" value="1"/>
</dbReference>
<dbReference type="Gene3D" id="3.30.1390.10">
    <property type="match status" value="1"/>
</dbReference>
<dbReference type="Gene3D" id="1.20.5.710">
    <property type="entry name" value="Single helix bin"/>
    <property type="match status" value="1"/>
</dbReference>
<dbReference type="HAMAP" id="MF_00368">
    <property type="entry name" value="Ribosomal_bL12"/>
    <property type="match status" value="1"/>
</dbReference>
<dbReference type="InterPro" id="IPR000206">
    <property type="entry name" value="Ribosomal_bL12"/>
</dbReference>
<dbReference type="InterPro" id="IPR013823">
    <property type="entry name" value="Ribosomal_bL12_C"/>
</dbReference>
<dbReference type="InterPro" id="IPR014719">
    <property type="entry name" value="Ribosomal_bL12_C/ClpS-like"/>
</dbReference>
<dbReference type="InterPro" id="IPR008932">
    <property type="entry name" value="Ribosomal_bL12_oligo"/>
</dbReference>
<dbReference type="InterPro" id="IPR036235">
    <property type="entry name" value="Ribosomal_bL12_oligo_N_sf"/>
</dbReference>
<dbReference type="NCBIfam" id="TIGR00855">
    <property type="entry name" value="L12"/>
    <property type="match status" value="1"/>
</dbReference>
<dbReference type="PANTHER" id="PTHR45987">
    <property type="entry name" value="39S RIBOSOMAL PROTEIN L12"/>
    <property type="match status" value="1"/>
</dbReference>
<dbReference type="PANTHER" id="PTHR45987:SF4">
    <property type="entry name" value="LARGE RIBOSOMAL SUBUNIT PROTEIN BL12M"/>
    <property type="match status" value="1"/>
</dbReference>
<dbReference type="Pfam" id="PF00542">
    <property type="entry name" value="Ribosomal_L12"/>
    <property type="match status" value="1"/>
</dbReference>
<dbReference type="Pfam" id="PF16320">
    <property type="entry name" value="Ribosomal_L12_N"/>
    <property type="match status" value="1"/>
</dbReference>
<dbReference type="SUPFAM" id="SSF54736">
    <property type="entry name" value="ClpS-like"/>
    <property type="match status" value="1"/>
</dbReference>
<dbReference type="SUPFAM" id="SSF48300">
    <property type="entry name" value="Ribosomal protein L7/12, oligomerisation (N-terminal) domain"/>
    <property type="match status" value="1"/>
</dbReference>
<name>RL7_DECAR</name>